<evidence type="ECO:0000250" key="1">
    <source>
        <dbReference type="UniProtKB" id="P43487"/>
    </source>
</evidence>
<evidence type="ECO:0000255" key="2">
    <source>
        <dbReference type="PROSITE-ProRule" id="PRU00164"/>
    </source>
</evidence>
<evidence type="ECO:0000256" key="3">
    <source>
        <dbReference type="SAM" id="MobiDB-lite"/>
    </source>
</evidence>
<evidence type="ECO:0000269" key="4">
    <source>
    </source>
</evidence>
<evidence type="ECO:0000269" key="5">
    <source>
    </source>
</evidence>
<evidence type="ECO:0000269" key="6">
    <source>
    </source>
</evidence>
<evidence type="ECO:0000269" key="7">
    <source>
    </source>
</evidence>
<evidence type="ECO:0000305" key="8"/>
<evidence type="ECO:0007744" key="9">
    <source>
    </source>
</evidence>
<evidence type="ECO:0007744" key="10">
    <source>
    </source>
</evidence>
<proteinExistence type="evidence at protein level"/>
<dbReference type="EMBL" id="X56046">
    <property type="protein sequence ID" value="CAA39517.1"/>
    <property type="molecule type" value="mRNA"/>
</dbReference>
<dbReference type="EMBL" id="L25255">
    <property type="protein sequence ID" value="AAA16195.1"/>
    <property type="molecule type" value="mRNA"/>
</dbReference>
<dbReference type="EMBL" id="X56045">
    <property type="protein sequence ID" value="CAA39516.1"/>
    <property type="molecule type" value="mRNA"/>
</dbReference>
<dbReference type="EMBL" id="AK002989">
    <property type="protein sequence ID" value="BAB22501.1"/>
    <property type="molecule type" value="mRNA"/>
</dbReference>
<dbReference type="EMBL" id="AK008276">
    <property type="protein sequence ID" value="BAB25569.1"/>
    <property type="molecule type" value="mRNA"/>
</dbReference>
<dbReference type="EMBL" id="AK088781">
    <property type="protein sequence ID" value="BAC40569.1"/>
    <property type="molecule type" value="mRNA"/>
</dbReference>
<dbReference type="EMBL" id="AK151167">
    <property type="protein sequence ID" value="BAE30170.1"/>
    <property type="molecule type" value="mRNA"/>
</dbReference>
<dbReference type="EMBL" id="AK166642">
    <property type="protein sequence ID" value="BAE38911.1"/>
    <property type="molecule type" value="mRNA"/>
</dbReference>
<dbReference type="EMBL" id="AK167053">
    <property type="protein sequence ID" value="BAE39217.1"/>
    <property type="molecule type" value="mRNA"/>
</dbReference>
<dbReference type="EMBL" id="BC061140">
    <property type="protein sequence ID" value="AAH61140.1"/>
    <property type="molecule type" value="mRNA"/>
</dbReference>
<dbReference type="CCDS" id="CCDS37280.1"/>
<dbReference type="PIR" id="JQ1973">
    <property type="entry name" value="JQ1973"/>
</dbReference>
<dbReference type="RefSeq" id="NP_035369.2">
    <property type="nucleotide sequence ID" value="NM_011239.2"/>
</dbReference>
<dbReference type="SMR" id="P34022"/>
<dbReference type="BioGRID" id="202581">
    <property type="interactions" value="37"/>
</dbReference>
<dbReference type="FunCoup" id="P34022">
    <property type="interactions" value="3062"/>
</dbReference>
<dbReference type="IntAct" id="P34022">
    <property type="interactions" value="21"/>
</dbReference>
<dbReference type="STRING" id="10090.ENSMUSP00000111309"/>
<dbReference type="GlyGen" id="P34022">
    <property type="glycosylation" value="1 site, 1 O-linked glycan (1 site)"/>
</dbReference>
<dbReference type="iPTMnet" id="P34022"/>
<dbReference type="PhosphoSitePlus" id="P34022"/>
<dbReference type="SwissPalm" id="P34022"/>
<dbReference type="REPRODUCTION-2DPAGE" id="P34022"/>
<dbReference type="CPTAC" id="non-CPTAC-3859"/>
<dbReference type="CPTAC" id="non-CPTAC-3860"/>
<dbReference type="jPOST" id="P34022"/>
<dbReference type="PaxDb" id="10090-ENSMUSP00000111309"/>
<dbReference type="PeptideAtlas" id="P34022"/>
<dbReference type="ProteomicsDB" id="254980"/>
<dbReference type="Pumba" id="P34022"/>
<dbReference type="TopDownProteomics" id="P34022"/>
<dbReference type="Antibodypedia" id="23138">
    <property type="antibodies" value="284 antibodies from 35 providers"/>
</dbReference>
<dbReference type="DNASU" id="19385"/>
<dbReference type="Ensembl" id="ENSMUST00000115645.10">
    <property type="protein sequence ID" value="ENSMUSP00000111309.4"/>
    <property type="gene ID" value="ENSMUSG00000005732.15"/>
</dbReference>
<dbReference type="GeneID" id="19385"/>
<dbReference type="KEGG" id="mmu:19385"/>
<dbReference type="UCSC" id="uc007ymy.1">
    <property type="organism name" value="mouse"/>
</dbReference>
<dbReference type="AGR" id="MGI:96269"/>
<dbReference type="CTD" id="5902"/>
<dbReference type="MGI" id="MGI:96269">
    <property type="gene designation" value="Ranbp1"/>
</dbReference>
<dbReference type="VEuPathDB" id="HostDB:ENSMUSG00000005732"/>
<dbReference type="eggNOG" id="KOG0864">
    <property type="taxonomic scope" value="Eukaryota"/>
</dbReference>
<dbReference type="GeneTree" id="ENSGT00900000141073"/>
<dbReference type="InParanoid" id="P34022"/>
<dbReference type="OMA" id="NFKDSFM"/>
<dbReference type="OrthoDB" id="2357150at2759"/>
<dbReference type="PhylomeDB" id="P34022"/>
<dbReference type="BioGRID-ORCS" id="19385">
    <property type="hits" value="17 hits in 79 CRISPR screens"/>
</dbReference>
<dbReference type="ChiTaRS" id="Ranbp1">
    <property type="organism name" value="mouse"/>
</dbReference>
<dbReference type="PRO" id="PR:P34022"/>
<dbReference type="Proteomes" id="UP000000589">
    <property type="component" value="Chromosome 16"/>
</dbReference>
<dbReference type="RNAct" id="P34022">
    <property type="molecule type" value="protein"/>
</dbReference>
<dbReference type="Bgee" id="ENSMUSG00000005732">
    <property type="expression patterns" value="Expressed in yolk sac and 75 other cell types or tissues"/>
</dbReference>
<dbReference type="ExpressionAtlas" id="P34022">
    <property type="expression patterns" value="baseline and differential"/>
</dbReference>
<dbReference type="GO" id="GO:0005813">
    <property type="term" value="C:centrosome"/>
    <property type="evidence" value="ECO:0000314"/>
    <property type="project" value="MGI"/>
</dbReference>
<dbReference type="GO" id="GO:0005737">
    <property type="term" value="C:cytoplasm"/>
    <property type="evidence" value="ECO:0000314"/>
    <property type="project" value="MGI"/>
</dbReference>
<dbReference type="GO" id="GO:0005829">
    <property type="term" value="C:cytosol"/>
    <property type="evidence" value="ECO:0007669"/>
    <property type="project" value="Ensembl"/>
</dbReference>
<dbReference type="GO" id="GO:0005096">
    <property type="term" value="F:GTPase activator activity"/>
    <property type="evidence" value="ECO:0007669"/>
    <property type="project" value="UniProtKB-KW"/>
</dbReference>
<dbReference type="GO" id="GO:0006913">
    <property type="term" value="P:nucleocytoplasmic transport"/>
    <property type="evidence" value="ECO:0007669"/>
    <property type="project" value="InterPro"/>
</dbReference>
<dbReference type="GO" id="GO:0046604">
    <property type="term" value="P:positive regulation of mitotic centrosome separation"/>
    <property type="evidence" value="ECO:0000314"/>
    <property type="project" value="MGI"/>
</dbReference>
<dbReference type="GO" id="GO:0007051">
    <property type="term" value="P:spindle organization"/>
    <property type="evidence" value="ECO:0000314"/>
    <property type="project" value="MGI"/>
</dbReference>
<dbReference type="CDD" id="cd13179">
    <property type="entry name" value="RanBD_RanBP1"/>
    <property type="match status" value="1"/>
</dbReference>
<dbReference type="FunFam" id="2.30.29.30:FF:000824">
    <property type="entry name" value="Ran-specific GTPase-activating protein"/>
    <property type="match status" value="1"/>
</dbReference>
<dbReference type="Gene3D" id="2.30.29.30">
    <property type="entry name" value="Pleckstrin-homology domain (PH domain)/Phosphotyrosine-binding domain (PTB)"/>
    <property type="match status" value="1"/>
</dbReference>
<dbReference type="InterPro" id="IPR011993">
    <property type="entry name" value="PH-like_dom_sf"/>
</dbReference>
<dbReference type="InterPro" id="IPR000156">
    <property type="entry name" value="Ran_bind_dom"/>
</dbReference>
<dbReference type="InterPro" id="IPR045255">
    <property type="entry name" value="RanBP1-like"/>
</dbReference>
<dbReference type="InterPro" id="IPR045256">
    <property type="entry name" value="RanBP1_RanBD"/>
</dbReference>
<dbReference type="PANTHER" id="PTHR23138">
    <property type="entry name" value="RAN BINDING PROTEIN"/>
    <property type="match status" value="1"/>
</dbReference>
<dbReference type="PANTHER" id="PTHR23138:SF182">
    <property type="entry name" value="RAN-SPECIFIC GTPASE-ACTIVATING PROTEIN"/>
    <property type="match status" value="1"/>
</dbReference>
<dbReference type="Pfam" id="PF00638">
    <property type="entry name" value="Ran_BP1"/>
    <property type="match status" value="1"/>
</dbReference>
<dbReference type="SMART" id="SM00160">
    <property type="entry name" value="RanBD"/>
    <property type="match status" value="1"/>
</dbReference>
<dbReference type="SUPFAM" id="SSF50729">
    <property type="entry name" value="PH domain-like"/>
    <property type="match status" value="1"/>
</dbReference>
<dbReference type="PROSITE" id="PS50196">
    <property type="entry name" value="RANBD1"/>
    <property type="match status" value="1"/>
</dbReference>
<organism>
    <name type="scientific">Mus musculus</name>
    <name type="common">Mouse</name>
    <dbReference type="NCBI Taxonomy" id="10090"/>
    <lineage>
        <taxon>Eukaryota</taxon>
        <taxon>Metazoa</taxon>
        <taxon>Chordata</taxon>
        <taxon>Craniata</taxon>
        <taxon>Vertebrata</taxon>
        <taxon>Euteleostomi</taxon>
        <taxon>Mammalia</taxon>
        <taxon>Eutheria</taxon>
        <taxon>Euarchontoglires</taxon>
        <taxon>Glires</taxon>
        <taxon>Rodentia</taxon>
        <taxon>Myomorpha</taxon>
        <taxon>Muroidea</taxon>
        <taxon>Muridae</taxon>
        <taxon>Murinae</taxon>
        <taxon>Mus</taxon>
        <taxon>Mus</taxon>
    </lineage>
</organism>
<accession>P34022</accession>
<accession>P34023</accession>
<accession>Q3TL81</accession>
<accession>Q9D894</accession>
<accession>Q9DCA3</accession>
<gene>
    <name type="primary">Ranbp1</name>
    <name type="synonym">Htf9-a</name>
    <name type="synonym">Htf9a</name>
</gene>
<name>RANG_MOUSE</name>
<reference key="1">
    <citation type="journal article" date="1993" name="Nature">
        <title>Characterization of proteins that interact with the cell-cycle regulatory protein Ran/TC4.</title>
        <authorList>
            <person name="Coutavas E."/>
            <person name="Ren M."/>
            <person name="Oppenheim J.D."/>
            <person name="D'Eustachio P."/>
            <person name="Rush M.G."/>
        </authorList>
    </citation>
    <scope>NUCLEOTIDE SEQUENCE [MRNA]</scope>
    <scope>INTERACTION WITH RAN</scope>
</reference>
<reference key="2">
    <citation type="journal article" date="1991" name="Gene">
        <title>Characterization of the opposite-strand genes from the mouse bidirectionally transcribed HTF9 locus.</title>
        <authorList>
            <person name="Bressan A."/>
            <person name="Somma M.P."/>
            <person name="Lewis J."/>
            <person name="Santolamazza C."/>
            <person name="Copeland N.G."/>
            <person name="Gilbert D.J."/>
            <person name="Jenkins N.A."/>
            <person name="Lavia P."/>
        </authorList>
    </citation>
    <scope>NUCLEOTIDE SEQUENCE [MRNA]</scope>
    <source>
        <strain>C57BL/6J</strain>
    </source>
</reference>
<reference key="3">
    <citation type="submission" date="1990-11" db="EMBL/GenBank/DDBJ databases">
        <authorList>
            <person name="Lavia P."/>
        </authorList>
    </citation>
    <scope>NUCLEOTIDE SEQUENCE [MRNA]</scope>
    <source>
        <strain>C57BL/6J</strain>
    </source>
</reference>
<reference key="4">
    <citation type="journal article" date="2005" name="Science">
        <title>The transcriptional landscape of the mammalian genome.</title>
        <authorList>
            <person name="Carninci P."/>
            <person name="Kasukawa T."/>
            <person name="Katayama S."/>
            <person name="Gough J."/>
            <person name="Frith M.C."/>
            <person name="Maeda N."/>
            <person name="Oyama R."/>
            <person name="Ravasi T."/>
            <person name="Lenhard B."/>
            <person name="Wells C."/>
            <person name="Kodzius R."/>
            <person name="Shimokawa K."/>
            <person name="Bajic V.B."/>
            <person name="Brenner S.E."/>
            <person name="Batalov S."/>
            <person name="Forrest A.R."/>
            <person name="Zavolan M."/>
            <person name="Davis M.J."/>
            <person name="Wilming L.G."/>
            <person name="Aidinis V."/>
            <person name="Allen J.E."/>
            <person name="Ambesi-Impiombato A."/>
            <person name="Apweiler R."/>
            <person name="Aturaliya R.N."/>
            <person name="Bailey T.L."/>
            <person name="Bansal M."/>
            <person name="Baxter L."/>
            <person name="Beisel K.W."/>
            <person name="Bersano T."/>
            <person name="Bono H."/>
            <person name="Chalk A.M."/>
            <person name="Chiu K.P."/>
            <person name="Choudhary V."/>
            <person name="Christoffels A."/>
            <person name="Clutterbuck D.R."/>
            <person name="Crowe M.L."/>
            <person name="Dalla E."/>
            <person name="Dalrymple B.P."/>
            <person name="de Bono B."/>
            <person name="Della Gatta G."/>
            <person name="di Bernardo D."/>
            <person name="Down T."/>
            <person name="Engstrom P."/>
            <person name="Fagiolini M."/>
            <person name="Faulkner G."/>
            <person name="Fletcher C.F."/>
            <person name="Fukushima T."/>
            <person name="Furuno M."/>
            <person name="Futaki S."/>
            <person name="Gariboldi M."/>
            <person name="Georgii-Hemming P."/>
            <person name="Gingeras T.R."/>
            <person name="Gojobori T."/>
            <person name="Green R.E."/>
            <person name="Gustincich S."/>
            <person name="Harbers M."/>
            <person name="Hayashi Y."/>
            <person name="Hensch T.K."/>
            <person name="Hirokawa N."/>
            <person name="Hill D."/>
            <person name="Huminiecki L."/>
            <person name="Iacono M."/>
            <person name="Ikeo K."/>
            <person name="Iwama A."/>
            <person name="Ishikawa T."/>
            <person name="Jakt M."/>
            <person name="Kanapin A."/>
            <person name="Katoh M."/>
            <person name="Kawasawa Y."/>
            <person name="Kelso J."/>
            <person name="Kitamura H."/>
            <person name="Kitano H."/>
            <person name="Kollias G."/>
            <person name="Krishnan S.P."/>
            <person name="Kruger A."/>
            <person name="Kummerfeld S.K."/>
            <person name="Kurochkin I.V."/>
            <person name="Lareau L.F."/>
            <person name="Lazarevic D."/>
            <person name="Lipovich L."/>
            <person name="Liu J."/>
            <person name="Liuni S."/>
            <person name="McWilliam S."/>
            <person name="Madan Babu M."/>
            <person name="Madera M."/>
            <person name="Marchionni L."/>
            <person name="Matsuda H."/>
            <person name="Matsuzawa S."/>
            <person name="Miki H."/>
            <person name="Mignone F."/>
            <person name="Miyake S."/>
            <person name="Morris K."/>
            <person name="Mottagui-Tabar S."/>
            <person name="Mulder N."/>
            <person name="Nakano N."/>
            <person name="Nakauchi H."/>
            <person name="Ng P."/>
            <person name="Nilsson R."/>
            <person name="Nishiguchi S."/>
            <person name="Nishikawa S."/>
            <person name="Nori F."/>
            <person name="Ohara O."/>
            <person name="Okazaki Y."/>
            <person name="Orlando V."/>
            <person name="Pang K.C."/>
            <person name="Pavan W.J."/>
            <person name="Pavesi G."/>
            <person name="Pesole G."/>
            <person name="Petrovsky N."/>
            <person name="Piazza S."/>
            <person name="Reed J."/>
            <person name="Reid J.F."/>
            <person name="Ring B.Z."/>
            <person name="Ringwald M."/>
            <person name="Rost B."/>
            <person name="Ruan Y."/>
            <person name="Salzberg S.L."/>
            <person name="Sandelin A."/>
            <person name="Schneider C."/>
            <person name="Schoenbach C."/>
            <person name="Sekiguchi K."/>
            <person name="Semple C.A."/>
            <person name="Seno S."/>
            <person name="Sessa L."/>
            <person name="Sheng Y."/>
            <person name="Shibata Y."/>
            <person name="Shimada H."/>
            <person name="Shimada K."/>
            <person name="Silva D."/>
            <person name="Sinclair B."/>
            <person name="Sperling S."/>
            <person name="Stupka E."/>
            <person name="Sugiura K."/>
            <person name="Sultana R."/>
            <person name="Takenaka Y."/>
            <person name="Taki K."/>
            <person name="Tammoja K."/>
            <person name="Tan S.L."/>
            <person name="Tang S."/>
            <person name="Taylor M.S."/>
            <person name="Tegner J."/>
            <person name="Teichmann S.A."/>
            <person name="Ueda H.R."/>
            <person name="van Nimwegen E."/>
            <person name="Verardo R."/>
            <person name="Wei C.L."/>
            <person name="Yagi K."/>
            <person name="Yamanishi H."/>
            <person name="Zabarovsky E."/>
            <person name="Zhu S."/>
            <person name="Zimmer A."/>
            <person name="Hide W."/>
            <person name="Bult C."/>
            <person name="Grimmond S.M."/>
            <person name="Teasdale R.D."/>
            <person name="Liu E.T."/>
            <person name="Brusic V."/>
            <person name="Quackenbush J."/>
            <person name="Wahlestedt C."/>
            <person name="Mattick J.S."/>
            <person name="Hume D.A."/>
            <person name="Kai C."/>
            <person name="Sasaki D."/>
            <person name="Tomaru Y."/>
            <person name="Fukuda S."/>
            <person name="Kanamori-Katayama M."/>
            <person name="Suzuki M."/>
            <person name="Aoki J."/>
            <person name="Arakawa T."/>
            <person name="Iida J."/>
            <person name="Imamura K."/>
            <person name="Itoh M."/>
            <person name="Kato T."/>
            <person name="Kawaji H."/>
            <person name="Kawagashira N."/>
            <person name="Kawashima T."/>
            <person name="Kojima M."/>
            <person name="Kondo S."/>
            <person name="Konno H."/>
            <person name="Nakano K."/>
            <person name="Ninomiya N."/>
            <person name="Nishio T."/>
            <person name="Okada M."/>
            <person name="Plessy C."/>
            <person name="Shibata K."/>
            <person name="Shiraki T."/>
            <person name="Suzuki S."/>
            <person name="Tagami M."/>
            <person name="Waki K."/>
            <person name="Watahiki A."/>
            <person name="Okamura-Oho Y."/>
            <person name="Suzuki H."/>
            <person name="Kawai J."/>
            <person name="Hayashizaki Y."/>
        </authorList>
    </citation>
    <scope>NUCLEOTIDE SEQUENCE [LARGE SCALE MRNA]</scope>
    <source>
        <strain>C57BL/6J</strain>
        <tissue>Bone marrow</tissue>
        <tissue>Brain</tissue>
        <tissue>Small intestine</tissue>
        <tissue>Thymus</tissue>
    </source>
</reference>
<reference key="5">
    <citation type="journal article" date="2004" name="Genome Res.">
        <title>The status, quality, and expansion of the NIH full-length cDNA project: the Mammalian Gene Collection (MGC).</title>
        <authorList>
            <consortium name="The MGC Project Team"/>
        </authorList>
    </citation>
    <scope>NUCLEOTIDE SEQUENCE [LARGE SCALE MRNA]</scope>
    <source>
        <tissue>Testis</tissue>
    </source>
</reference>
<reference key="6">
    <citation type="journal article" date="1995" name="Mol. Cell. Biol.">
        <title>Separate domains of the Ran GTPase interact with different factors to regulate nuclear protein import and RNA processing.</title>
        <authorList>
            <person name="Ren M."/>
            <person name="Villamarin A."/>
            <person name="Shih A."/>
            <person name="Coutavas E."/>
            <person name="Moore M.S."/>
            <person name="Locurcio M."/>
            <person name="Clarke V."/>
            <person name="Oppenheim J.D."/>
            <person name="D'Eustachio P."/>
            <person name="Rush M.G."/>
        </authorList>
    </citation>
    <scope>INTERACTION WITH RAN</scope>
</reference>
<reference key="7">
    <citation type="journal article" date="1996" name="EMBO J.">
        <title>Identification of different roles for RanGDP and RanGTP in nuclear protein import.</title>
        <authorList>
            <person name="Goerlich D."/>
            <person name="Pante N."/>
            <person name="Kutay U."/>
            <person name="Aebi U."/>
            <person name="Bischoff F.R."/>
        </authorList>
    </citation>
    <scope>INTERACTION WITH RAN</scope>
</reference>
<reference key="8">
    <citation type="journal article" date="1997" name="FEBS Lett.">
        <title>RanBP1 is crucial for the release of RanGTP from importin beta-related nuclear transport factors.</title>
        <authorList>
            <person name="Bischoff F.R."/>
            <person name="Goerlich D."/>
        </authorList>
    </citation>
    <scope>FUNCTION</scope>
    <scope>INTERACTION WITH RAN</scope>
    <scope>SUBUNIT</scope>
</reference>
<reference key="9">
    <citation type="journal article" date="2007" name="Proc. Natl. Acad. Sci. U.S.A.">
        <title>Large-scale phosphorylation analysis of mouse liver.</title>
        <authorList>
            <person name="Villen J."/>
            <person name="Beausoleil S.A."/>
            <person name="Gerber S.A."/>
            <person name="Gygi S.P."/>
        </authorList>
    </citation>
    <scope>IDENTIFICATION BY MASS SPECTROMETRY [LARGE SCALE ANALYSIS]</scope>
    <source>
        <tissue>Liver</tissue>
    </source>
</reference>
<reference key="10">
    <citation type="journal article" date="2010" name="Cell">
        <title>A tissue-specific atlas of mouse protein phosphorylation and expression.</title>
        <authorList>
            <person name="Huttlin E.L."/>
            <person name="Jedrychowski M.P."/>
            <person name="Elias J.E."/>
            <person name="Goswami T."/>
            <person name="Rad R."/>
            <person name="Beausoleil S.A."/>
            <person name="Villen J."/>
            <person name="Haas W."/>
            <person name="Sowa M.E."/>
            <person name="Gygi S.P."/>
        </authorList>
    </citation>
    <scope>PHOSPHORYLATION [LARGE SCALE ANALYSIS] AT SER-60</scope>
    <scope>IDENTIFICATION BY MASS SPECTROMETRY [LARGE SCALE ANALYSIS]</scope>
    <source>
        <tissue>Brain</tissue>
        <tissue>Brown adipose tissue</tissue>
        <tissue>Heart</tissue>
        <tissue>Kidney</tissue>
        <tissue>Liver</tissue>
        <tissue>Lung</tissue>
        <tissue>Pancreas</tissue>
        <tissue>Spleen</tissue>
        <tissue>Testis</tissue>
    </source>
</reference>
<reference key="11">
    <citation type="journal article" date="2013" name="Mol. Cell">
        <title>SIRT5-mediated lysine desuccinylation impacts diverse metabolic pathways.</title>
        <authorList>
            <person name="Park J."/>
            <person name="Chen Y."/>
            <person name="Tishkoff D.X."/>
            <person name="Peng C."/>
            <person name="Tan M."/>
            <person name="Dai L."/>
            <person name="Xie Z."/>
            <person name="Zhang Y."/>
            <person name="Zwaans B.M."/>
            <person name="Skinner M.E."/>
            <person name="Lombard D.B."/>
            <person name="Zhao Y."/>
        </authorList>
    </citation>
    <scope>ACETYLATION [LARGE SCALE ANALYSIS] AT LYS-150 AND LYS-182</scope>
    <scope>SUCCINYLATION [LARGE SCALE ANALYSIS] AT LYS-150</scope>
    <scope>IDENTIFICATION BY MASS SPECTROMETRY [LARGE SCALE ANALYSIS]</scope>
    <source>
        <tissue>Embryonic fibroblast</tissue>
    </source>
</reference>
<comment type="function">
    <text evidence="1 7">Plays a role in RAN-dependent nucleocytoplasmic transport. Alleviates the TNPO1-dependent inhibition of RAN GTPase activity and mediates the dissociation of RAN from proteins involved in transport into the nucleus (PubMed:9428644). Induces a conformation change in the complex formed by XPO1 and RAN that triggers the release of the nuclear export signal of cargo proteins (By similarity). Promotes the disassembly of the complex formed by RAN and importin beta. Promotes dissociation of RAN from a complex with KPNA2 and CSE1L (PubMed:9428644). Required for normal mitotic spindle assembly and normal progress through mitosis via its effect on RAN (By similarity). Does not increase the RAN GTPase activity by itself, but increases GTP hydrolysis mediated by RANGAP1 (PubMed:9428644). Inhibits RCC1-dependent exchange of RAN-bound GDP by GTP (By similarity).</text>
</comment>
<comment type="subunit">
    <text evidence="1 4 5 6 7">Interacts with RAN (via C-terminus of GTP-bound form) but not with GDP-bound RAN (PubMed:7891706, PubMed:8255297, PubMed:8896452). Identified in a complex composed of RAN, RANGAP1 and RANBP1 (By similarity). Identified in a complex that contains TNPO1, RAN and RANBP1 (PubMed:9428644). Identified in a complex that contains CSE1L, KPNA2, RAN and RANBP1 (PubMed:9428644). Identified in a complex with nucleotide-free RAN and RCC1 (By similarity).</text>
</comment>
<comment type="miscellaneous">
    <text>Htf9a (RanBP1) and Htf9c are transcribed with opposite polarity from complementary DNA strands from a shared bidirectional TATA-less promoter.</text>
</comment>
<comment type="similarity">
    <text evidence="8">Belongs to the RANBP1 family.</text>
</comment>
<protein>
    <recommendedName>
        <fullName>Ran-specific GTPase-activating protein</fullName>
    </recommendedName>
    <alternativeName>
        <fullName>HpaII tiny fragments locus 9a protein</fullName>
    </alternativeName>
    <alternativeName>
        <fullName>Ran-binding protein 1</fullName>
        <shortName>RANBP1</shortName>
    </alternativeName>
</protein>
<feature type="initiator methionine" description="Removed" evidence="1">
    <location>
        <position position="1"/>
    </location>
</feature>
<feature type="chain" id="PRO_0000213668" description="Ran-specific GTPase-activating protein">
    <location>
        <begin position="2"/>
        <end position="203"/>
    </location>
</feature>
<feature type="domain" description="RanBD1" evidence="2">
    <location>
        <begin position="26"/>
        <end position="164"/>
    </location>
</feature>
<feature type="region of interest" description="Disordered" evidence="3">
    <location>
        <begin position="1"/>
        <end position="33"/>
    </location>
</feature>
<feature type="region of interest" description="Disordered" evidence="3">
    <location>
        <begin position="163"/>
        <end position="203"/>
    </location>
</feature>
<feature type="compositionally biased region" description="Basic and acidic residues" evidence="3">
    <location>
        <begin position="1"/>
        <end position="26"/>
    </location>
</feature>
<feature type="compositionally biased region" description="Basic and acidic residues" evidence="3">
    <location>
        <begin position="163"/>
        <end position="192"/>
    </location>
</feature>
<feature type="compositionally biased region" description="Acidic residues" evidence="3">
    <location>
        <begin position="193"/>
        <end position="203"/>
    </location>
</feature>
<feature type="modified residue" description="N-acetylalanine" evidence="1">
    <location>
        <position position="2"/>
    </location>
</feature>
<feature type="modified residue" description="Phosphothreonine" evidence="1">
    <location>
        <position position="13"/>
    </location>
</feature>
<feature type="modified residue" description="Phosphoserine" evidence="1">
    <location>
        <position position="21"/>
    </location>
</feature>
<feature type="modified residue" description="Phosphoserine" evidence="9">
    <location>
        <position position="60"/>
    </location>
</feature>
<feature type="modified residue" description="N6-acetyllysine; alternate" evidence="10">
    <location>
        <position position="150"/>
    </location>
</feature>
<feature type="modified residue" description="N6-succinyllysine; alternate" evidence="10">
    <location>
        <position position="150"/>
    </location>
</feature>
<feature type="modified residue" description="N6-acetyllysine" evidence="10">
    <location>
        <position position="182"/>
    </location>
</feature>
<feature type="modified residue" description="Phosphoserine" evidence="1">
    <location>
        <position position="187"/>
    </location>
</feature>
<feature type="sequence conflict" description="In Ref. 2." evidence="8" ref="2">
    <original>E</original>
    <variation>A</variation>
    <location>
        <position position="9"/>
    </location>
</feature>
<feature type="sequence conflict" description="In Ref. 2." evidence="8" ref="2">
    <original>NHD</original>
    <variation>TTH</variation>
    <location>
        <begin position="22"/>
        <end position="24"/>
    </location>
</feature>
<feature type="sequence conflict" description="In Ref. 1 and 2." evidence="8" ref="1 2">
    <original>L</original>
    <variation>V</variation>
    <location>
        <position position="33"/>
    </location>
</feature>
<feature type="sequence conflict" description="In Ref. 4; BAB25569." evidence="8" ref="4">
    <original>W</original>
    <variation>R</variation>
    <location>
        <position position="67"/>
    </location>
</feature>
<feature type="sequence conflict" description="In Ref. 2." evidence="8" ref="2">
    <original>RGT</original>
    <variation>PRH</variation>
    <location>
        <begin position="70"/>
        <end position="72"/>
    </location>
</feature>
<feature type="sequence conflict" description="In Ref. 4; BAB25569." evidence="8" ref="4">
    <original>T</original>
    <variation>P</variation>
    <location>
        <position position="85"/>
    </location>
</feature>
<feature type="sequence conflict" description="In Ref. 2 and 3." evidence="8" ref="2 3">
    <original>A</original>
    <variation>T</variation>
    <location>
        <position position="126"/>
    </location>
</feature>
<keyword id="KW-0007">Acetylation</keyword>
<keyword id="KW-0343">GTPase activation</keyword>
<keyword id="KW-0597">Phosphoprotein</keyword>
<keyword id="KW-1185">Reference proteome</keyword>
<sequence length="203" mass="23596">MAAAKDSHEDHDTSTENADESNHDPQFEPIVSLPEQEIKTLEEDEEELFKMRAKLFRFASENDLPEWKERGTGDVKLLKHKEKGTIRLLMRRDKTLKICANHYITPMMELKPNAGSDRAWVWNTHADFADECPKPELLAIRFLNAENAQKFKTKFEECRKEIEEREKKGPGKNDNAEKVAEKLEALSVREAREEAEEKSEEKQ</sequence>